<organism>
    <name type="scientific">Mycoplasma capricolum subsp. capricolum (strain California kid / ATCC 27343 / NCTC 10154)</name>
    <dbReference type="NCBI Taxonomy" id="340047"/>
    <lineage>
        <taxon>Bacteria</taxon>
        <taxon>Bacillati</taxon>
        <taxon>Mycoplasmatota</taxon>
        <taxon>Mollicutes</taxon>
        <taxon>Mycoplasmataceae</taxon>
        <taxon>Mycoplasma</taxon>
    </lineage>
</organism>
<accession>Q2SS50</accession>
<dbReference type="EC" id="1.1.1.27" evidence="1"/>
<dbReference type="EMBL" id="CP000123">
    <property type="protein sequence ID" value="ABC01779.1"/>
    <property type="molecule type" value="Genomic_DNA"/>
</dbReference>
<dbReference type="RefSeq" id="WP_011387312.1">
    <property type="nucleotide sequence ID" value="NC_007633.1"/>
</dbReference>
<dbReference type="SMR" id="Q2SS50"/>
<dbReference type="GeneID" id="23778605"/>
<dbReference type="KEGG" id="mcp:MCAP_0439"/>
<dbReference type="HOGENOM" id="CLU_045401_1_2_14"/>
<dbReference type="PhylomeDB" id="Q2SS50"/>
<dbReference type="UniPathway" id="UPA00554">
    <property type="reaction ID" value="UER00611"/>
</dbReference>
<dbReference type="Proteomes" id="UP000001928">
    <property type="component" value="Chromosome"/>
</dbReference>
<dbReference type="GO" id="GO:0005737">
    <property type="term" value="C:cytoplasm"/>
    <property type="evidence" value="ECO:0007669"/>
    <property type="project" value="UniProtKB-SubCell"/>
</dbReference>
<dbReference type="GO" id="GO:0004459">
    <property type="term" value="F:L-lactate dehydrogenase activity"/>
    <property type="evidence" value="ECO:0007669"/>
    <property type="project" value="UniProtKB-UniRule"/>
</dbReference>
<dbReference type="GO" id="GO:0006096">
    <property type="term" value="P:glycolytic process"/>
    <property type="evidence" value="ECO:0007669"/>
    <property type="project" value="UniProtKB-UniRule"/>
</dbReference>
<dbReference type="GO" id="GO:0006089">
    <property type="term" value="P:lactate metabolic process"/>
    <property type="evidence" value="ECO:0007669"/>
    <property type="project" value="TreeGrafter"/>
</dbReference>
<dbReference type="CDD" id="cd05291">
    <property type="entry name" value="HicDH_like"/>
    <property type="match status" value="1"/>
</dbReference>
<dbReference type="FunFam" id="3.40.50.720:FF:000018">
    <property type="entry name" value="Malate dehydrogenase"/>
    <property type="match status" value="1"/>
</dbReference>
<dbReference type="Gene3D" id="3.90.110.10">
    <property type="entry name" value="Lactate dehydrogenase/glycoside hydrolase, family 4, C-terminal"/>
    <property type="match status" value="1"/>
</dbReference>
<dbReference type="Gene3D" id="3.40.50.720">
    <property type="entry name" value="NAD(P)-binding Rossmann-like Domain"/>
    <property type="match status" value="1"/>
</dbReference>
<dbReference type="HAMAP" id="MF_00488">
    <property type="entry name" value="Lactate_dehydrog"/>
    <property type="match status" value="1"/>
</dbReference>
<dbReference type="InterPro" id="IPR001557">
    <property type="entry name" value="L-lactate/malate_DH"/>
</dbReference>
<dbReference type="InterPro" id="IPR011304">
    <property type="entry name" value="L-lactate_DH"/>
</dbReference>
<dbReference type="InterPro" id="IPR018177">
    <property type="entry name" value="L-lactate_DH_AS"/>
</dbReference>
<dbReference type="InterPro" id="IPR022383">
    <property type="entry name" value="Lactate/malate_DH_C"/>
</dbReference>
<dbReference type="InterPro" id="IPR001236">
    <property type="entry name" value="Lactate/malate_DH_N"/>
</dbReference>
<dbReference type="InterPro" id="IPR015955">
    <property type="entry name" value="Lactate_DH/Glyco_Ohase_4_C"/>
</dbReference>
<dbReference type="InterPro" id="IPR036291">
    <property type="entry name" value="NAD(P)-bd_dom_sf"/>
</dbReference>
<dbReference type="NCBIfam" id="TIGR01771">
    <property type="entry name" value="L-LDH-NAD"/>
    <property type="match status" value="1"/>
</dbReference>
<dbReference type="NCBIfam" id="NF000824">
    <property type="entry name" value="PRK00066.1"/>
    <property type="match status" value="1"/>
</dbReference>
<dbReference type="NCBIfam" id="NF004863">
    <property type="entry name" value="PRK06223.1"/>
    <property type="match status" value="1"/>
</dbReference>
<dbReference type="PANTHER" id="PTHR43128">
    <property type="entry name" value="L-2-HYDROXYCARBOXYLATE DEHYDROGENASE (NAD(P)(+))"/>
    <property type="match status" value="1"/>
</dbReference>
<dbReference type="PANTHER" id="PTHR43128:SF16">
    <property type="entry name" value="L-LACTATE DEHYDROGENASE"/>
    <property type="match status" value="1"/>
</dbReference>
<dbReference type="Pfam" id="PF02866">
    <property type="entry name" value="Ldh_1_C"/>
    <property type="match status" value="1"/>
</dbReference>
<dbReference type="Pfam" id="PF00056">
    <property type="entry name" value="Ldh_1_N"/>
    <property type="match status" value="1"/>
</dbReference>
<dbReference type="PIRSF" id="PIRSF000102">
    <property type="entry name" value="Lac_mal_DH"/>
    <property type="match status" value="1"/>
</dbReference>
<dbReference type="PRINTS" id="PR00086">
    <property type="entry name" value="LLDHDRGNASE"/>
</dbReference>
<dbReference type="SUPFAM" id="SSF56327">
    <property type="entry name" value="LDH C-terminal domain-like"/>
    <property type="match status" value="1"/>
</dbReference>
<dbReference type="SUPFAM" id="SSF51735">
    <property type="entry name" value="NAD(P)-binding Rossmann-fold domains"/>
    <property type="match status" value="1"/>
</dbReference>
<dbReference type="PROSITE" id="PS00064">
    <property type="entry name" value="L_LDH"/>
    <property type="match status" value="1"/>
</dbReference>
<name>LDH_MYCCT</name>
<gene>
    <name evidence="1" type="primary">ldh</name>
    <name type="ordered locus">MCAP_0439</name>
</gene>
<protein>
    <recommendedName>
        <fullName evidence="1">L-lactate dehydrogenase</fullName>
        <shortName evidence="1">L-LDH</shortName>
        <ecNumber evidence="1">1.1.1.27</ecNumber>
    </recommendedName>
</protein>
<feature type="chain" id="PRO_0000237552" description="L-lactate dehydrogenase">
    <location>
        <begin position="1"/>
        <end position="317"/>
    </location>
</feature>
<feature type="active site" description="Proton acceptor" evidence="1">
    <location>
        <position position="179"/>
    </location>
</feature>
<feature type="binding site" evidence="1">
    <location>
        <position position="16"/>
    </location>
    <ligand>
        <name>NAD(+)</name>
        <dbReference type="ChEBI" id="CHEBI:57540"/>
    </ligand>
</feature>
<feature type="binding site" evidence="1">
    <location>
        <position position="37"/>
    </location>
    <ligand>
        <name>NAD(+)</name>
        <dbReference type="ChEBI" id="CHEBI:57540"/>
    </ligand>
</feature>
<feature type="binding site" evidence="1">
    <location>
        <position position="69"/>
    </location>
    <ligand>
        <name>NAD(+)</name>
        <dbReference type="ChEBI" id="CHEBI:57540"/>
    </ligand>
</feature>
<feature type="binding site" evidence="1">
    <location>
        <position position="86"/>
    </location>
    <ligand>
        <name>substrate</name>
    </ligand>
</feature>
<feature type="binding site" evidence="1">
    <location>
        <position position="92"/>
    </location>
    <ligand>
        <name>substrate</name>
    </ligand>
</feature>
<feature type="binding site" evidence="1">
    <location>
        <begin position="122"/>
        <end position="124"/>
    </location>
    <ligand>
        <name>NAD(+)</name>
        <dbReference type="ChEBI" id="CHEBI:57540"/>
    </ligand>
</feature>
<feature type="binding site" evidence="1">
    <location>
        <begin position="124"/>
        <end position="127"/>
    </location>
    <ligand>
        <name>substrate</name>
    </ligand>
</feature>
<feature type="binding site" evidence="1">
    <location>
        <position position="147"/>
    </location>
    <ligand>
        <name>NAD(+)</name>
        <dbReference type="ChEBI" id="CHEBI:57540"/>
    </ligand>
</feature>
<feature type="binding site" evidence="1">
    <location>
        <begin position="152"/>
        <end position="155"/>
    </location>
    <ligand>
        <name>substrate</name>
    </ligand>
</feature>
<feature type="binding site" evidence="1">
    <location>
        <position position="232"/>
    </location>
    <ligand>
        <name>substrate</name>
    </ligand>
</feature>
<feature type="modified residue" description="Phosphotyrosine" evidence="1">
    <location>
        <position position="223"/>
    </location>
</feature>
<reference key="1">
    <citation type="submission" date="2005-09" db="EMBL/GenBank/DDBJ databases">
        <authorList>
            <person name="Glass J.I."/>
            <person name="Lartigue C."/>
            <person name="Pfannkoch C."/>
            <person name="Baden-Tillson H."/>
            <person name="Smith H.O."/>
            <person name="Venter J.C."/>
            <person name="Roske K."/>
            <person name="Wise K.S."/>
            <person name="Calcutt M.J."/>
            <person name="Nelson W.C."/>
            <person name="Nierman W.C."/>
        </authorList>
    </citation>
    <scope>NUCLEOTIDE SEQUENCE [LARGE SCALE GENOMIC DNA]</scope>
    <source>
        <strain>California kid / ATCC 27343 / NCTC 10154</strain>
    </source>
</reference>
<evidence type="ECO:0000255" key="1">
    <source>
        <dbReference type="HAMAP-Rule" id="MF_00488"/>
    </source>
</evidence>
<comment type="function">
    <text evidence="1">Catalyzes the conversion of lactate to pyruvate.</text>
</comment>
<comment type="catalytic activity">
    <reaction evidence="1">
        <text>(S)-lactate + NAD(+) = pyruvate + NADH + H(+)</text>
        <dbReference type="Rhea" id="RHEA:23444"/>
        <dbReference type="ChEBI" id="CHEBI:15361"/>
        <dbReference type="ChEBI" id="CHEBI:15378"/>
        <dbReference type="ChEBI" id="CHEBI:16651"/>
        <dbReference type="ChEBI" id="CHEBI:57540"/>
        <dbReference type="ChEBI" id="CHEBI:57945"/>
        <dbReference type="EC" id="1.1.1.27"/>
    </reaction>
</comment>
<comment type="pathway">
    <text evidence="1">Fermentation; pyruvate fermentation to lactate; (S)-lactate from pyruvate: step 1/1.</text>
</comment>
<comment type="subunit">
    <text evidence="1">Homotetramer.</text>
</comment>
<comment type="subcellular location">
    <subcellularLocation>
        <location evidence="1">Cytoplasm</location>
    </subcellularLocation>
</comment>
<comment type="similarity">
    <text evidence="1">Belongs to the LDH/MDH superfamily. LDH family.</text>
</comment>
<sequence>MKKTANKVVLIGAGAVGTSFLYAAINQGIAEHYVLIDAFPQPAEGNALDLSDTLAVIPHSFTSIKAGSYEDCKDADVVVITAGRPQKPGETRLEMVAGNAEIMKNIATEVKKSGFDGITVIASNPVDVITHVYQKVTGFDPHKVIGSGTTLDSARLRRLVGQKLNVKPESVQAYVAGEHGDSSVAIWSQANIMGRPILDYVKCGCLTLEDLDQIQKDTVDMAYKIINLKRATFYGIGACLTKIVNAVLRDEKATLMVGAQLNGEYKNKDLYTGVPAIIGSNGWEKIIEWDLTKEEQEKFDKSCETLHKTIDSVKHLF</sequence>
<proteinExistence type="inferred from homology"/>
<keyword id="KW-0963">Cytoplasm</keyword>
<keyword id="KW-0520">NAD</keyword>
<keyword id="KW-0560">Oxidoreductase</keyword>
<keyword id="KW-0597">Phosphoprotein</keyword>